<proteinExistence type="inferred from homology"/>
<dbReference type="EC" id="2.7.8.7" evidence="1"/>
<dbReference type="EMBL" id="CP001098">
    <property type="protein sequence ID" value="ACL68928.1"/>
    <property type="molecule type" value="Genomic_DNA"/>
</dbReference>
<dbReference type="RefSeq" id="WP_012635126.1">
    <property type="nucleotide sequence ID" value="NC_011899.1"/>
</dbReference>
<dbReference type="SMR" id="B8D0V9"/>
<dbReference type="STRING" id="373903.Hore_01660"/>
<dbReference type="KEGG" id="hor:Hore_01660"/>
<dbReference type="eggNOG" id="COG0736">
    <property type="taxonomic scope" value="Bacteria"/>
</dbReference>
<dbReference type="HOGENOM" id="CLU_089696_0_2_9"/>
<dbReference type="OrthoDB" id="517356at2"/>
<dbReference type="Proteomes" id="UP000000719">
    <property type="component" value="Chromosome"/>
</dbReference>
<dbReference type="GO" id="GO:0005737">
    <property type="term" value="C:cytoplasm"/>
    <property type="evidence" value="ECO:0007669"/>
    <property type="project" value="UniProtKB-SubCell"/>
</dbReference>
<dbReference type="GO" id="GO:0008897">
    <property type="term" value="F:holo-[acyl-carrier-protein] synthase activity"/>
    <property type="evidence" value="ECO:0007669"/>
    <property type="project" value="UniProtKB-UniRule"/>
</dbReference>
<dbReference type="GO" id="GO:0000287">
    <property type="term" value="F:magnesium ion binding"/>
    <property type="evidence" value="ECO:0007669"/>
    <property type="project" value="UniProtKB-UniRule"/>
</dbReference>
<dbReference type="GO" id="GO:0006633">
    <property type="term" value="P:fatty acid biosynthetic process"/>
    <property type="evidence" value="ECO:0007669"/>
    <property type="project" value="UniProtKB-UniRule"/>
</dbReference>
<dbReference type="Gene3D" id="3.90.470.20">
    <property type="entry name" value="4'-phosphopantetheinyl transferase domain"/>
    <property type="match status" value="1"/>
</dbReference>
<dbReference type="HAMAP" id="MF_00101">
    <property type="entry name" value="AcpS"/>
    <property type="match status" value="1"/>
</dbReference>
<dbReference type="InterPro" id="IPR008278">
    <property type="entry name" value="4-PPantetheinyl_Trfase_dom"/>
</dbReference>
<dbReference type="InterPro" id="IPR037143">
    <property type="entry name" value="4-PPantetheinyl_Trfase_dom_sf"/>
</dbReference>
<dbReference type="InterPro" id="IPR002582">
    <property type="entry name" value="ACPS"/>
</dbReference>
<dbReference type="InterPro" id="IPR004568">
    <property type="entry name" value="Ppantetheine-prot_Trfase_dom"/>
</dbReference>
<dbReference type="NCBIfam" id="TIGR00516">
    <property type="entry name" value="acpS"/>
    <property type="match status" value="1"/>
</dbReference>
<dbReference type="NCBIfam" id="TIGR00556">
    <property type="entry name" value="pantethn_trn"/>
    <property type="match status" value="1"/>
</dbReference>
<dbReference type="Pfam" id="PF01648">
    <property type="entry name" value="ACPS"/>
    <property type="match status" value="1"/>
</dbReference>
<dbReference type="SUPFAM" id="SSF56214">
    <property type="entry name" value="4'-phosphopantetheinyl transferase"/>
    <property type="match status" value="1"/>
</dbReference>
<comment type="function">
    <text evidence="1">Transfers the 4'-phosphopantetheine moiety from coenzyme A to a Ser of acyl-carrier-protein.</text>
</comment>
<comment type="catalytic activity">
    <reaction evidence="1">
        <text>apo-[ACP] + CoA = holo-[ACP] + adenosine 3',5'-bisphosphate + H(+)</text>
        <dbReference type="Rhea" id="RHEA:12068"/>
        <dbReference type="Rhea" id="RHEA-COMP:9685"/>
        <dbReference type="Rhea" id="RHEA-COMP:9690"/>
        <dbReference type="ChEBI" id="CHEBI:15378"/>
        <dbReference type="ChEBI" id="CHEBI:29999"/>
        <dbReference type="ChEBI" id="CHEBI:57287"/>
        <dbReference type="ChEBI" id="CHEBI:58343"/>
        <dbReference type="ChEBI" id="CHEBI:64479"/>
        <dbReference type="EC" id="2.7.8.7"/>
    </reaction>
</comment>
<comment type="cofactor">
    <cofactor evidence="1">
        <name>Mg(2+)</name>
        <dbReference type="ChEBI" id="CHEBI:18420"/>
    </cofactor>
</comment>
<comment type="subcellular location">
    <subcellularLocation>
        <location evidence="1">Cytoplasm</location>
    </subcellularLocation>
</comment>
<comment type="similarity">
    <text evidence="1">Belongs to the P-Pant transferase superfamily. AcpS family.</text>
</comment>
<name>ACPS_HALOH</name>
<feature type="chain" id="PRO_1000118811" description="Holo-[acyl-carrier-protein] synthase">
    <location>
        <begin position="1"/>
        <end position="125"/>
    </location>
</feature>
<feature type="binding site" evidence="1">
    <location>
        <position position="8"/>
    </location>
    <ligand>
        <name>Mg(2+)</name>
        <dbReference type="ChEBI" id="CHEBI:18420"/>
    </ligand>
</feature>
<feature type="binding site" evidence="1">
    <location>
        <position position="57"/>
    </location>
    <ligand>
        <name>Mg(2+)</name>
        <dbReference type="ChEBI" id="CHEBI:18420"/>
    </ligand>
</feature>
<protein>
    <recommendedName>
        <fullName evidence="1">Holo-[acyl-carrier-protein] synthase</fullName>
        <shortName evidence="1">Holo-ACP synthase</shortName>
        <ecNumber evidence="1">2.7.8.7</ecNumber>
    </recommendedName>
    <alternativeName>
        <fullName evidence="1">4'-phosphopantetheinyl transferase AcpS</fullName>
    </alternativeName>
</protein>
<sequence length="125" mass="14429">MIRGIGIDIVEVNRISDMVDKWGERFLNKVYTPYEVNYCKFKSNTYECLAGRFAAKEAFVKMLGTGFKHIYFKDIEVRSDEKGKPYLRIKGNADRLTKESGIKRIHLSISHERKFAIAFVVGEEG</sequence>
<accession>B8D0V9</accession>
<organism>
    <name type="scientific">Halothermothrix orenii (strain H 168 / OCM 544 / DSM 9562)</name>
    <dbReference type="NCBI Taxonomy" id="373903"/>
    <lineage>
        <taxon>Bacteria</taxon>
        <taxon>Bacillati</taxon>
        <taxon>Bacillota</taxon>
        <taxon>Clostridia</taxon>
        <taxon>Halanaerobiales</taxon>
        <taxon>Halothermotrichaceae</taxon>
        <taxon>Halothermothrix</taxon>
    </lineage>
</organism>
<keyword id="KW-0963">Cytoplasm</keyword>
<keyword id="KW-0275">Fatty acid biosynthesis</keyword>
<keyword id="KW-0276">Fatty acid metabolism</keyword>
<keyword id="KW-0444">Lipid biosynthesis</keyword>
<keyword id="KW-0443">Lipid metabolism</keyword>
<keyword id="KW-0460">Magnesium</keyword>
<keyword id="KW-0479">Metal-binding</keyword>
<keyword id="KW-1185">Reference proteome</keyword>
<keyword id="KW-0808">Transferase</keyword>
<gene>
    <name evidence="1" type="primary">acpS</name>
    <name type="ordered locus">Hore_01660</name>
</gene>
<evidence type="ECO:0000255" key="1">
    <source>
        <dbReference type="HAMAP-Rule" id="MF_00101"/>
    </source>
</evidence>
<reference key="1">
    <citation type="journal article" date="2009" name="PLoS ONE">
        <title>Genome analysis of the anaerobic thermohalophilic bacterium Halothermothrix orenii.</title>
        <authorList>
            <person name="Mavromatis K."/>
            <person name="Ivanova N."/>
            <person name="Anderson I."/>
            <person name="Lykidis A."/>
            <person name="Hooper S.D."/>
            <person name="Sun H."/>
            <person name="Kunin V."/>
            <person name="Lapidus A."/>
            <person name="Hugenholtz P."/>
            <person name="Patel B."/>
            <person name="Kyrpides N.C."/>
        </authorList>
    </citation>
    <scope>NUCLEOTIDE SEQUENCE [LARGE SCALE GENOMIC DNA]</scope>
    <source>
        <strain>H 168 / OCM 544 / DSM 9562</strain>
    </source>
</reference>